<sequence>MPKYNVINQLGDLISTKDLKSNVFDIQPHQQALYDVINAQRAAMRQGTHATKTRAFVSGGGKKPWRQKGTGRARHGSIRSPLWRGGGVVFGPSPRNYSVKVNQKVSHLALKSALSSHFRQNQLILVDDFNLDTHKSKDFQKTLQKLNVTSKALIIVTNSNRNLTLASRNLPYVTLETAAHASVYQILNCKNLILTLDAVAYFEEVLK</sequence>
<reference key="1">
    <citation type="journal article" date="2008" name="J. Bacteriol.">
        <title>Comparative genome analysis of 'Candidatus Phytoplasma australiense' (subgroup tuf-Australia I; rp-A) and 'Ca. Phytoplasma asteris' strains OY-M and AY-WB.</title>
        <authorList>
            <person name="Tran-Nguyen L.T."/>
            <person name="Kube M."/>
            <person name="Schneider B."/>
            <person name="Reinhardt R."/>
            <person name="Gibb K.S."/>
        </authorList>
    </citation>
    <scope>NUCLEOTIDE SEQUENCE [LARGE SCALE GENOMIC DNA]</scope>
</reference>
<evidence type="ECO:0000255" key="1">
    <source>
        <dbReference type="HAMAP-Rule" id="MF_01328"/>
    </source>
</evidence>
<evidence type="ECO:0000256" key="2">
    <source>
        <dbReference type="SAM" id="MobiDB-lite"/>
    </source>
</evidence>
<evidence type="ECO:0000305" key="3"/>
<name>RL4_PHYAS</name>
<protein>
    <recommendedName>
        <fullName evidence="1">Large ribosomal subunit protein uL4</fullName>
    </recommendedName>
    <alternativeName>
        <fullName evidence="3">50S ribosomal protein L4</fullName>
    </alternativeName>
</protein>
<accession>B1VAE7</accession>
<organism>
    <name type="scientific">Phytoplasma australiense</name>
    <dbReference type="NCBI Taxonomy" id="59748"/>
    <lineage>
        <taxon>Bacteria</taxon>
        <taxon>Bacillati</taxon>
        <taxon>Mycoplasmatota</taxon>
        <taxon>Mollicutes</taxon>
        <taxon>Acholeplasmatales</taxon>
        <taxon>Acholeplasmataceae</taxon>
        <taxon>Candidatus Phytoplasma</taxon>
        <taxon>16SrXII (Stolbur group)</taxon>
    </lineage>
</organism>
<proteinExistence type="inferred from homology"/>
<keyword id="KW-1185">Reference proteome</keyword>
<keyword id="KW-0687">Ribonucleoprotein</keyword>
<keyword id="KW-0689">Ribosomal protein</keyword>
<keyword id="KW-0694">RNA-binding</keyword>
<keyword id="KW-0699">rRNA-binding</keyword>
<feature type="chain" id="PRO_1000142165" description="Large ribosomal subunit protein uL4">
    <location>
        <begin position="1"/>
        <end position="207"/>
    </location>
</feature>
<feature type="region of interest" description="Disordered" evidence="2">
    <location>
        <begin position="56"/>
        <end position="77"/>
    </location>
</feature>
<feature type="compositionally biased region" description="Basic residues" evidence="2">
    <location>
        <begin position="63"/>
        <end position="77"/>
    </location>
</feature>
<dbReference type="EMBL" id="AM422018">
    <property type="protein sequence ID" value="CAM11920.1"/>
    <property type="molecule type" value="Genomic_DNA"/>
</dbReference>
<dbReference type="SMR" id="B1VAE7"/>
<dbReference type="STRING" id="59748.PA0586"/>
<dbReference type="KEGG" id="pal:PA0586"/>
<dbReference type="eggNOG" id="COG0088">
    <property type="taxonomic scope" value="Bacteria"/>
</dbReference>
<dbReference type="Proteomes" id="UP000008323">
    <property type="component" value="Chromosome"/>
</dbReference>
<dbReference type="GO" id="GO:1990904">
    <property type="term" value="C:ribonucleoprotein complex"/>
    <property type="evidence" value="ECO:0007669"/>
    <property type="project" value="UniProtKB-KW"/>
</dbReference>
<dbReference type="GO" id="GO:0005840">
    <property type="term" value="C:ribosome"/>
    <property type="evidence" value="ECO:0007669"/>
    <property type="project" value="UniProtKB-KW"/>
</dbReference>
<dbReference type="GO" id="GO:0019843">
    <property type="term" value="F:rRNA binding"/>
    <property type="evidence" value="ECO:0007669"/>
    <property type="project" value="UniProtKB-UniRule"/>
</dbReference>
<dbReference type="GO" id="GO:0003735">
    <property type="term" value="F:structural constituent of ribosome"/>
    <property type="evidence" value="ECO:0007669"/>
    <property type="project" value="InterPro"/>
</dbReference>
<dbReference type="GO" id="GO:0006412">
    <property type="term" value="P:translation"/>
    <property type="evidence" value="ECO:0007669"/>
    <property type="project" value="UniProtKB-UniRule"/>
</dbReference>
<dbReference type="Gene3D" id="3.40.1370.10">
    <property type="match status" value="1"/>
</dbReference>
<dbReference type="HAMAP" id="MF_01328_B">
    <property type="entry name" value="Ribosomal_uL4_B"/>
    <property type="match status" value="1"/>
</dbReference>
<dbReference type="InterPro" id="IPR002136">
    <property type="entry name" value="Ribosomal_uL4"/>
</dbReference>
<dbReference type="InterPro" id="IPR013005">
    <property type="entry name" value="Ribosomal_uL4-like"/>
</dbReference>
<dbReference type="InterPro" id="IPR023574">
    <property type="entry name" value="Ribosomal_uL4_dom_sf"/>
</dbReference>
<dbReference type="NCBIfam" id="TIGR03953">
    <property type="entry name" value="rplD_bact"/>
    <property type="match status" value="1"/>
</dbReference>
<dbReference type="PANTHER" id="PTHR10746">
    <property type="entry name" value="50S RIBOSOMAL PROTEIN L4"/>
    <property type="match status" value="1"/>
</dbReference>
<dbReference type="PANTHER" id="PTHR10746:SF6">
    <property type="entry name" value="LARGE RIBOSOMAL SUBUNIT PROTEIN UL4M"/>
    <property type="match status" value="1"/>
</dbReference>
<dbReference type="Pfam" id="PF00573">
    <property type="entry name" value="Ribosomal_L4"/>
    <property type="match status" value="1"/>
</dbReference>
<dbReference type="SUPFAM" id="SSF52166">
    <property type="entry name" value="Ribosomal protein L4"/>
    <property type="match status" value="1"/>
</dbReference>
<gene>
    <name evidence="1" type="primary">rplD</name>
    <name type="ordered locus">PA0586</name>
</gene>
<comment type="function">
    <text evidence="1">One of the primary rRNA binding proteins, this protein initially binds near the 5'-end of the 23S rRNA. It is important during the early stages of 50S assembly. It makes multiple contacts with different domains of the 23S rRNA in the assembled 50S subunit and ribosome.</text>
</comment>
<comment type="function">
    <text evidence="1">Forms part of the polypeptide exit tunnel.</text>
</comment>
<comment type="subunit">
    <text evidence="1">Part of the 50S ribosomal subunit.</text>
</comment>
<comment type="similarity">
    <text evidence="1">Belongs to the universal ribosomal protein uL4 family.</text>
</comment>